<reference key="1">
    <citation type="journal article" date="2007" name="J. Bacteriol.">
        <title>Whole-genome analysis of the methyl tert-butyl ether-degrading beta-proteobacterium Methylibium petroleiphilum PM1.</title>
        <authorList>
            <person name="Kane S.R."/>
            <person name="Chakicherla A.Y."/>
            <person name="Chain P.S.G."/>
            <person name="Schmidt R."/>
            <person name="Shin M.W."/>
            <person name="Legler T.C."/>
            <person name="Scow K.M."/>
            <person name="Larimer F.W."/>
            <person name="Lucas S.M."/>
            <person name="Richardson P.M."/>
            <person name="Hristova K.R."/>
        </authorList>
    </citation>
    <scope>NUCLEOTIDE SEQUENCE [LARGE SCALE GENOMIC DNA]</scope>
    <source>
        <strain>ATCC BAA-1232 / LMG 22953 / PM1</strain>
    </source>
</reference>
<gene>
    <name type="ordered locus">Mpe_A2486</name>
</gene>
<comment type="similarity">
    <text evidence="1">Belongs to the UPF0434 family.</text>
</comment>
<accession>A2SIQ2</accession>
<name>Y2486_METPP</name>
<protein>
    <recommendedName>
        <fullName evidence="1">UPF0434 protein Mpe_A2486</fullName>
    </recommendedName>
</protein>
<evidence type="ECO:0000255" key="1">
    <source>
        <dbReference type="HAMAP-Rule" id="MF_01187"/>
    </source>
</evidence>
<feature type="chain" id="PRO_0000291112" description="UPF0434 protein Mpe_A2486">
    <location>
        <begin position="1"/>
        <end position="65"/>
    </location>
</feature>
<organism>
    <name type="scientific">Methylibium petroleiphilum (strain ATCC BAA-1232 / LMG 22953 / PM1)</name>
    <dbReference type="NCBI Taxonomy" id="420662"/>
    <lineage>
        <taxon>Bacteria</taxon>
        <taxon>Pseudomonadati</taxon>
        <taxon>Pseudomonadota</taxon>
        <taxon>Betaproteobacteria</taxon>
        <taxon>Burkholderiales</taxon>
        <taxon>Sphaerotilaceae</taxon>
        <taxon>Methylibium</taxon>
    </lineage>
</organism>
<keyword id="KW-1185">Reference proteome</keyword>
<sequence>MDTRLMDLLVCPICKGPLTHDHSSHELHCAADRLAFPIRDGIPVMLESEARALDESPSQAAPLSE</sequence>
<proteinExistence type="inferred from homology"/>
<dbReference type="EMBL" id="CP000555">
    <property type="protein sequence ID" value="ABM95441.1"/>
    <property type="molecule type" value="Genomic_DNA"/>
</dbReference>
<dbReference type="RefSeq" id="WP_011830074.1">
    <property type="nucleotide sequence ID" value="NC_008825.1"/>
</dbReference>
<dbReference type="SMR" id="A2SIQ2"/>
<dbReference type="STRING" id="420662.Mpe_A2486"/>
<dbReference type="KEGG" id="mpt:Mpe_A2486"/>
<dbReference type="eggNOG" id="COG2835">
    <property type="taxonomic scope" value="Bacteria"/>
</dbReference>
<dbReference type="HOGENOM" id="CLU_155659_3_1_4"/>
<dbReference type="Proteomes" id="UP000000366">
    <property type="component" value="Chromosome"/>
</dbReference>
<dbReference type="GO" id="GO:0005829">
    <property type="term" value="C:cytosol"/>
    <property type="evidence" value="ECO:0007669"/>
    <property type="project" value="TreeGrafter"/>
</dbReference>
<dbReference type="FunFam" id="2.20.25.10:FF:000002">
    <property type="entry name" value="UPF0434 protein YcaR"/>
    <property type="match status" value="1"/>
</dbReference>
<dbReference type="Gene3D" id="2.20.25.10">
    <property type="match status" value="1"/>
</dbReference>
<dbReference type="HAMAP" id="MF_01187">
    <property type="entry name" value="UPF0434"/>
    <property type="match status" value="1"/>
</dbReference>
<dbReference type="InterPro" id="IPR005651">
    <property type="entry name" value="Trm112-like"/>
</dbReference>
<dbReference type="PANTHER" id="PTHR33505:SF4">
    <property type="entry name" value="PROTEIN PREY, MITOCHONDRIAL"/>
    <property type="match status" value="1"/>
</dbReference>
<dbReference type="PANTHER" id="PTHR33505">
    <property type="entry name" value="ZGC:162634"/>
    <property type="match status" value="1"/>
</dbReference>
<dbReference type="Pfam" id="PF03966">
    <property type="entry name" value="Trm112p"/>
    <property type="match status" value="1"/>
</dbReference>
<dbReference type="SUPFAM" id="SSF158997">
    <property type="entry name" value="Trm112p-like"/>
    <property type="match status" value="1"/>
</dbReference>